<comment type="function">
    <text>Actins are highly conserved proteins that are involved in various types of cell motility and are ubiquitously expressed in all eukaryotic cells.</text>
</comment>
<comment type="catalytic activity">
    <reaction evidence="1">
        <text>ATP + H2O = ADP + phosphate + H(+)</text>
        <dbReference type="Rhea" id="RHEA:13065"/>
        <dbReference type="ChEBI" id="CHEBI:15377"/>
        <dbReference type="ChEBI" id="CHEBI:15378"/>
        <dbReference type="ChEBI" id="CHEBI:30616"/>
        <dbReference type="ChEBI" id="CHEBI:43474"/>
        <dbReference type="ChEBI" id="CHEBI:456216"/>
    </reaction>
</comment>
<comment type="subcellular location">
    <subcellularLocation>
        <location>Cytoplasm</location>
        <location>Cytoskeleton</location>
    </subcellularLocation>
</comment>
<comment type="similarity">
    <text evidence="2">Belongs to the actin family.</text>
</comment>
<accession>P20904</accession>
<feature type="chain" id="PRO_0000089049" description="Actin">
    <location>
        <begin position="1"/>
        <end position="377"/>
    </location>
</feature>
<name>ACT_VOLCA</name>
<reference key="1">
    <citation type="journal article" date="1990" name="Curr. Genet.">
        <title>Structure and expression of a single actin gene in Volvox carteri.</title>
        <authorList>
            <person name="Cresnar B."/>
            <person name="Mages W."/>
            <person name="Mueller K."/>
            <person name="Salbaum J.M."/>
            <person name="Schmitt R."/>
        </authorList>
    </citation>
    <scope>NUCLEOTIDE SEQUENCE [GENOMIC DNA]</scope>
    <source>
        <strain>f. Nagariensis</strain>
    </source>
</reference>
<proteinExistence type="inferred from homology"/>
<organism>
    <name type="scientific">Volvox carteri</name>
    <name type="common">Green alga</name>
    <dbReference type="NCBI Taxonomy" id="3067"/>
    <lineage>
        <taxon>Eukaryota</taxon>
        <taxon>Viridiplantae</taxon>
        <taxon>Chlorophyta</taxon>
        <taxon>core chlorophytes</taxon>
        <taxon>Chlorophyceae</taxon>
        <taxon>CS clade</taxon>
        <taxon>Chlamydomonadales</taxon>
        <taxon>Volvocaceae</taxon>
        <taxon>Volvox</taxon>
    </lineage>
</organism>
<protein>
    <recommendedName>
        <fullName>Actin</fullName>
        <ecNumber evidence="1">3.6.4.-</ecNumber>
    </recommendedName>
</protein>
<evidence type="ECO:0000250" key="1">
    <source>
        <dbReference type="UniProtKB" id="P68137"/>
    </source>
</evidence>
<evidence type="ECO:0000305" key="2"/>
<keyword id="KW-0067">ATP-binding</keyword>
<keyword id="KW-0963">Cytoplasm</keyword>
<keyword id="KW-0206">Cytoskeleton</keyword>
<keyword id="KW-0378">Hydrolase</keyword>
<keyword id="KW-0547">Nucleotide-binding</keyword>
<dbReference type="EC" id="3.6.4.-" evidence="1"/>
<dbReference type="EMBL" id="M33963">
    <property type="protein sequence ID" value="AAA34243.1"/>
    <property type="molecule type" value="Genomic_DNA"/>
</dbReference>
<dbReference type="PIR" id="S14120">
    <property type="entry name" value="S14120"/>
</dbReference>
<dbReference type="SMR" id="P20904"/>
<dbReference type="OMA" id="KCDESIC"/>
<dbReference type="GO" id="GO:0005737">
    <property type="term" value="C:cytoplasm"/>
    <property type="evidence" value="ECO:0007669"/>
    <property type="project" value="UniProtKB-KW"/>
</dbReference>
<dbReference type="GO" id="GO:0005856">
    <property type="term" value="C:cytoskeleton"/>
    <property type="evidence" value="ECO:0007669"/>
    <property type="project" value="UniProtKB-SubCell"/>
</dbReference>
<dbReference type="GO" id="GO:0005524">
    <property type="term" value="F:ATP binding"/>
    <property type="evidence" value="ECO:0007669"/>
    <property type="project" value="UniProtKB-KW"/>
</dbReference>
<dbReference type="GO" id="GO:0016787">
    <property type="term" value="F:hydrolase activity"/>
    <property type="evidence" value="ECO:0007669"/>
    <property type="project" value="UniProtKB-KW"/>
</dbReference>
<dbReference type="CDD" id="cd10224">
    <property type="entry name" value="ASKHA_NBD_actin"/>
    <property type="match status" value="1"/>
</dbReference>
<dbReference type="FunFam" id="2.30.36.70:FF:000001">
    <property type="entry name" value="Actin, alpha skeletal muscle"/>
    <property type="match status" value="1"/>
</dbReference>
<dbReference type="FunFam" id="3.30.420.40:FF:000291">
    <property type="entry name" value="Actin, alpha skeletal muscle"/>
    <property type="match status" value="1"/>
</dbReference>
<dbReference type="FunFam" id="3.90.640.10:FF:000047">
    <property type="entry name" value="Actin, alpha skeletal muscle"/>
    <property type="match status" value="1"/>
</dbReference>
<dbReference type="FunFam" id="3.30.420.40:FF:000404">
    <property type="entry name" value="Major actin"/>
    <property type="match status" value="1"/>
</dbReference>
<dbReference type="FunFam" id="3.30.420.40:FF:000058">
    <property type="entry name" value="Putative actin-related protein 5"/>
    <property type="match status" value="1"/>
</dbReference>
<dbReference type="Gene3D" id="3.30.420.40">
    <property type="match status" value="2"/>
</dbReference>
<dbReference type="Gene3D" id="3.90.640.10">
    <property type="entry name" value="Actin, Chain A, domain 4"/>
    <property type="match status" value="1"/>
</dbReference>
<dbReference type="InterPro" id="IPR004000">
    <property type="entry name" value="Actin"/>
</dbReference>
<dbReference type="InterPro" id="IPR020902">
    <property type="entry name" value="Actin/actin-like_CS"/>
</dbReference>
<dbReference type="InterPro" id="IPR004001">
    <property type="entry name" value="Actin_CS"/>
</dbReference>
<dbReference type="InterPro" id="IPR043129">
    <property type="entry name" value="ATPase_NBD"/>
</dbReference>
<dbReference type="PANTHER" id="PTHR11937">
    <property type="entry name" value="ACTIN"/>
    <property type="match status" value="1"/>
</dbReference>
<dbReference type="Pfam" id="PF00022">
    <property type="entry name" value="Actin"/>
    <property type="match status" value="1"/>
</dbReference>
<dbReference type="PRINTS" id="PR00190">
    <property type="entry name" value="ACTIN"/>
</dbReference>
<dbReference type="SMART" id="SM00268">
    <property type="entry name" value="ACTIN"/>
    <property type="match status" value="1"/>
</dbReference>
<dbReference type="SUPFAM" id="SSF53067">
    <property type="entry name" value="Actin-like ATPase domain"/>
    <property type="match status" value="2"/>
</dbReference>
<dbReference type="PROSITE" id="PS00406">
    <property type="entry name" value="ACTINS_1"/>
    <property type="match status" value="1"/>
</dbReference>
<dbReference type="PROSITE" id="PS00432">
    <property type="entry name" value="ACTINS_2"/>
    <property type="match status" value="1"/>
</dbReference>
<dbReference type="PROSITE" id="PS01132">
    <property type="entry name" value="ACTINS_ACT_LIKE"/>
    <property type="match status" value="1"/>
</dbReference>
<sequence>MAEEGEVSALVCDNGSGMVKAGFAGDDAPRAVFPSIVGRPRHTGVMVGMGQKDSYVGDEAQSKRGILTLRYPIEHGIVTNWDDMEKIWHHTFFNELRVAPEEHPVLLTEAPLNPKANREKMTQIMFETFNVPAMYVAIQAVLSLYASGRTTGIVLDSGDGVTHTVPIYEGYALPHAILRLDLAGRDLTDYLMKILMERGYSFTTTAEREIVRDIKEKLCYVALDFEQEMATAASSSALEKTYELPDGQPITIGNERFRCPEVLYNPSLIGMEAVGIHDTTFNSIMKCDVDIRKDLYNNIVLSGGTTMFPGIADRMTKEITALAPSAMKIKVVAPPERKYSVWIGGSILASLSTFQQMWIAKSEYDESGPSIVHRKCF</sequence>